<name>EFP_RICM5</name>
<feature type="chain" id="PRO_1000057926" description="Elongation factor P">
    <location>
        <begin position="1"/>
        <end position="188"/>
    </location>
</feature>
<accession>A8F0Z8</accession>
<proteinExistence type="inferred from homology"/>
<evidence type="ECO:0000255" key="1">
    <source>
        <dbReference type="HAMAP-Rule" id="MF_00141"/>
    </source>
</evidence>
<dbReference type="EMBL" id="CP000683">
    <property type="protein sequence ID" value="ABV84584.1"/>
    <property type="molecule type" value="Genomic_DNA"/>
</dbReference>
<dbReference type="RefSeq" id="WP_012152561.1">
    <property type="nucleotide sequence ID" value="NC_009900.1"/>
</dbReference>
<dbReference type="SMR" id="A8F0Z8"/>
<dbReference type="KEGG" id="rms:RMA_0329"/>
<dbReference type="HOGENOM" id="CLU_074944_1_1_5"/>
<dbReference type="UniPathway" id="UPA00345"/>
<dbReference type="Proteomes" id="UP000001311">
    <property type="component" value="Chromosome"/>
</dbReference>
<dbReference type="GO" id="GO:0005737">
    <property type="term" value="C:cytoplasm"/>
    <property type="evidence" value="ECO:0007669"/>
    <property type="project" value="UniProtKB-SubCell"/>
</dbReference>
<dbReference type="GO" id="GO:0003746">
    <property type="term" value="F:translation elongation factor activity"/>
    <property type="evidence" value="ECO:0007669"/>
    <property type="project" value="UniProtKB-UniRule"/>
</dbReference>
<dbReference type="GO" id="GO:0043043">
    <property type="term" value="P:peptide biosynthetic process"/>
    <property type="evidence" value="ECO:0007669"/>
    <property type="project" value="InterPro"/>
</dbReference>
<dbReference type="CDD" id="cd04470">
    <property type="entry name" value="S1_EF-P_repeat_1"/>
    <property type="match status" value="1"/>
</dbReference>
<dbReference type="FunFam" id="2.40.50.140:FF:000004">
    <property type="entry name" value="Elongation factor P"/>
    <property type="match status" value="1"/>
</dbReference>
<dbReference type="FunFam" id="2.40.50.140:FF:000009">
    <property type="entry name" value="Elongation factor P"/>
    <property type="match status" value="1"/>
</dbReference>
<dbReference type="Gene3D" id="2.30.30.30">
    <property type="match status" value="1"/>
</dbReference>
<dbReference type="Gene3D" id="2.40.50.140">
    <property type="entry name" value="Nucleic acid-binding proteins"/>
    <property type="match status" value="2"/>
</dbReference>
<dbReference type="HAMAP" id="MF_00141">
    <property type="entry name" value="EF_P"/>
    <property type="match status" value="1"/>
</dbReference>
<dbReference type="InterPro" id="IPR015365">
    <property type="entry name" value="Elong-fact-P_C"/>
</dbReference>
<dbReference type="InterPro" id="IPR012340">
    <property type="entry name" value="NA-bd_OB-fold"/>
</dbReference>
<dbReference type="InterPro" id="IPR014722">
    <property type="entry name" value="Rib_uL2_dom2"/>
</dbReference>
<dbReference type="InterPro" id="IPR020599">
    <property type="entry name" value="Transl_elong_fac_P/YeiP"/>
</dbReference>
<dbReference type="InterPro" id="IPR013185">
    <property type="entry name" value="Transl_elong_KOW-like"/>
</dbReference>
<dbReference type="InterPro" id="IPR001059">
    <property type="entry name" value="Transl_elong_P/YeiP_cen"/>
</dbReference>
<dbReference type="InterPro" id="IPR013852">
    <property type="entry name" value="Transl_elong_P/YeiP_CS"/>
</dbReference>
<dbReference type="InterPro" id="IPR011768">
    <property type="entry name" value="Transl_elongation_fac_P"/>
</dbReference>
<dbReference type="InterPro" id="IPR008991">
    <property type="entry name" value="Translation_prot_SH3-like_sf"/>
</dbReference>
<dbReference type="NCBIfam" id="TIGR00038">
    <property type="entry name" value="efp"/>
    <property type="match status" value="1"/>
</dbReference>
<dbReference type="NCBIfam" id="NF001810">
    <property type="entry name" value="PRK00529.1"/>
    <property type="match status" value="1"/>
</dbReference>
<dbReference type="PANTHER" id="PTHR30053">
    <property type="entry name" value="ELONGATION FACTOR P"/>
    <property type="match status" value="1"/>
</dbReference>
<dbReference type="PANTHER" id="PTHR30053:SF14">
    <property type="entry name" value="TRANSLATION ELONGATION FACTOR KOW-LIKE DOMAIN-CONTAINING PROTEIN"/>
    <property type="match status" value="1"/>
</dbReference>
<dbReference type="Pfam" id="PF01132">
    <property type="entry name" value="EFP"/>
    <property type="match status" value="1"/>
</dbReference>
<dbReference type="Pfam" id="PF08207">
    <property type="entry name" value="EFP_N"/>
    <property type="match status" value="1"/>
</dbReference>
<dbReference type="Pfam" id="PF09285">
    <property type="entry name" value="Elong-fact-P_C"/>
    <property type="match status" value="1"/>
</dbReference>
<dbReference type="PIRSF" id="PIRSF005901">
    <property type="entry name" value="EF-P"/>
    <property type="match status" value="1"/>
</dbReference>
<dbReference type="SMART" id="SM01185">
    <property type="entry name" value="EFP"/>
    <property type="match status" value="1"/>
</dbReference>
<dbReference type="SMART" id="SM00841">
    <property type="entry name" value="Elong-fact-P_C"/>
    <property type="match status" value="1"/>
</dbReference>
<dbReference type="SUPFAM" id="SSF50249">
    <property type="entry name" value="Nucleic acid-binding proteins"/>
    <property type="match status" value="2"/>
</dbReference>
<dbReference type="SUPFAM" id="SSF50104">
    <property type="entry name" value="Translation proteins SH3-like domain"/>
    <property type="match status" value="1"/>
</dbReference>
<dbReference type="PROSITE" id="PS01275">
    <property type="entry name" value="EFP"/>
    <property type="match status" value="1"/>
</dbReference>
<sequence length="188" mass="21443">MKISANSIRTGNILVYNNDLWVVSKTPEHTQPGKGGAYVQVEMKNLKTGTKRNARFSSSDYLEKAELEQKDYQFLYFEGDDLVLMDTKHFDQINIPKEMLEEKLSFLTENMIVKVEFYNDKPLNIELLPTVILEISETDPVIKGATATASYKPAILENGIKVKVPQYLEIGEKIVVKTDDMTYVERAK</sequence>
<reference key="1">
    <citation type="journal article" date="2007" name="Genome Res.">
        <title>Lateral gene transfer between obligate intracellular bacteria: evidence from the Rickettsia massiliae genome.</title>
        <authorList>
            <person name="Blanc G."/>
            <person name="Ogata H."/>
            <person name="Robert C."/>
            <person name="Audic S."/>
            <person name="Claverie J.-M."/>
            <person name="Raoult D."/>
        </authorList>
    </citation>
    <scope>NUCLEOTIDE SEQUENCE [LARGE SCALE GENOMIC DNA]</scope>
    <source>
        <strain>Mtu5</strain>
    </source>
</reference>
<gene>
    <name evidence="1" type="primary">efp</name>
    <name type="ordered locus">RMA_0329</name>
</gene>
<organism>
    <name type="scientific">Rickettsia massiliae (strain Mtu5)</name>
    <dbReference type="NCBI Taxonomy" id="416276"/>
    <lineage>
        <taxon>Bacteria</taxon>
        <taxon>Pseudomonadati</taxon>
        <taxon>Pseudomonadota</taxon>
        <taxon>Alphaproteobacteria</taxon>
        <taxon>Rickettsiales</taxon>
        <taxon>Rickettsiaceae</taxon>
        <taxon>Rickettsieae</taxon>
        <taxon>Rickettsia</taxon>
        <taxon>spotted fever group</taxon>
    </lineage>
</organism>
<protein>
    <recommendedName>
        <fullName evidence="1">Elongation factor P</fullName>
        <shortName evidence="1">EF-P</shortName>
    </recommendedName>
</protein>
<comment type="function">
    <text evidence="1">Involved in peptide bond synthesis. Stimulates efficient translation and peptide-bond synthesis on native or reconstituted 70S ribosomes in vitro. Probably functions indirectly by altering the affinity of the ribosome for aminoacyl-tRNA, thus increasing their reactivity as acceptors for peptidyl transferase.</text>
</comment>
<comment type="pathway">
    <text evidence="1">Protein biosynthesis; polypeptide chain elongation.</text>
</comment>
<comment type="subcellular location">
    <subcellularLocation>
        <location evidence="1">Cytoplasm</location>
    </subcellularLocation>
</comment>
<comment type="similarity">
    <text evidence="1">Belongs to the elongation factor P family.</text>
</comment>
<keyword id="KW-0963">Cytoplasm</keyword>
<keyword id="KW-0251">Elongation factor</keyword>
<keyword id="KW-0648">Protein biosynthesis</keyword>